<proteinExistence type="inferred from homology"/>
<organism>
    <name type="scientific">Maridesulfovibrio salexigens (strain ATCC 14822 / DSM 2638 / NCIMB 8403 / VKM B-1763)</name>
    <name type="common">Desulfovibrio salexigens</name>
    <dbReference type="NCBI Taxonomy" id="526222"/>
    <lineage>
        <taxon>Bacteria</taxon>
        <taxon>Pseudomonadati</taxon>
        <taxon>Thermodesulfobacteriota</taxon>
        <taxon>Desulfovibrionia</taxon>
        <taxon>Desulfovibrionales</taxon>
        <taxon>Desulfovibrionaceae</taxon>
        <taxon>Maridesulfovibrio</taxon>
    </lineage>
</organism>
<protein>
    <recommendedName>
        <fullName evidence="1">Large ribosomal subunit protein uL4</fullName>
    </recommendedName>
    <alternativeName>
        <fullName evidence="3">50S ribosomal protein L4</fullName>
    </alternativeName>
</protein>
<dbReference type="EMBL" id="CP001649">
    <property type="protein sequence ID" value="ACS79249.1"/>
    <property type="molecule type" value="Genomic_DNA"/>
</dbReference>
<dbReference type="RefSeq" id="WP_015851068.1">
    <property type="nucleotide sequence ID" value="NC_012881.1"/>
</dbReference>
<dbReference type="SMR" id="C6C186"/>
<dbReference type="STRING" id="526222.Desal_1186"/>
<dbReference type="KEGG" id="dsa:Desal_1186"/>
<dbReference type="eggNOG" id="COG0088">
    <property type="taxonomic scope" value="Bacteria"/>
</dbReference>
<dbReference type="HOGENOM" id="CLU_041575_5_2_7"/>
<dbReference type="OrthoDB" id="9803201at2"/>
<dbReference type="Proteomes" id="UP000002601">
    <property type="component" value="Chromosome"/>
</dbReference>
<dbReference type="GO" id="GO:1990904">
    <property type="term" value="C:ribonucleoprotein complex"/>
    <property type="evidence" value="ECO:0007669"/>
    <property type="project" value="UniProtKB-KW"/>
</dbReference>
<dbReference type="GO" id="GO:0005840">
    <property type="term" value="C:ribosome"/>
    <property type="evidence" value="ECO:0007669"/>
    <property type="project" value="UniProtKB-KW"/>
</dbReference>
<dbReference type="GO" id="GO:0019843">
    <property type="term" value="F:rRNA binding"/>
    <property type="evidence" value="ECO:0007669"/>
    <property type="project" value="UniProtKB-UniRule"/>
</dbReference>
<dbReference type="GO" id="GO:0003735">
    <property type="term" value="F:structural constituent of ribosome"/>
    <property type="evidence" value="ECO:0007669"/>
    <property type="project" value="InterPro"/>
</dbReference>
<dbReference type="GO" id="GO:0006412">
    <property type="term" value="P:translation"/>
    <property type="evidence" value="ECO:0007669"/>
    <property type="project" value="UniProtKB-UniRule"/>
</dbReference>
<dbReference type="Gene3D" id="3.40.1370.10">
    <property type="match status" value="1"/>
</dbReference>
<dbReference type="HAMAP" id="MF_01328_B">
    <property type="entry name" value="Ribosomal_uL4_B"/>
    <property type="match status" value="1"/>
</dbReference>
<dbReference type="InterPro" id="IPR002136">
    <property type="entry name" value="Ribosomal_uL4"/>
</dbReference>
<dbReference type="InterPro" id="IPR013005">
    <property type="entry name" value="Ribosomal_uL4-like"/>
</dbReference>
<dbReference type="InterPro" id="IPR023574">
    <property type="entry name" value="Ribosomal_uL4_dom_sf"/>
</dbReference>
<dbReference type="NCBIfam" id="TIGR03953">
    <property type="entry name" value="rplD_bact"/>
    <property type="match status" value="1"/>
</dbReference>
<dbReference type="PANTHER" id="PTHR10746">
    <property type="entry name" value="50S RIBOSOMAL PROTEIN L4"/>
    <property type="match status" value="1"/>
</dbReference>
<dbReference type="PANTHER" id="PTHR10746:SF6">
    <property type="entry name" value="LARGE RIBOSOMAL SUBUNIT PROTEIN UL4M"/>
    <property type="match status" value="1"/>
</dbReference>
<dbReference type="Pfam" id="PF00573">
    <property type="entry name" value="Ribosomal_L4"/>
    <property type="match status" value="1"/>
</dbReference>
<dbReference type="SUPFAM" id="SSF52166">
    <property type="entry name" value="Ribosomal protein L4"/>
    <property type="match status" value="1"/>
</dbReference>
<gene>
    <name evidence="1" type="primary">rplD</name>
    <name type="ordered locus">Desal_1186</name>
</gene>
<reference key="1">
    <citation type="submission" date="2009-06" db="EMBL/GenBank/DDBJ databases">
        <title>Complete sequence of Desulfovibrio salexigens DSM 2638.</title>
        <authorList>
            <consortium name="US DOE Joint Genome Institute"/>
            <person name="Lucas S."/>
            <person name="Copeland A."/>
            <person name="Lapidus A."/>
            <person name="Glavina del Rio T."/>
            <person name="Tice H."/>
            <person name="Bruce D."/>
            <person name="Goodwin L."/>
            <person name="Pitluck S."/>
            <person name="Munk A.C."/>
            <person name="Brettin T."/>
            <person name="Detter J.C."/>
            <person name="Han C."/>
            <person name="Tapia R."/>
            <person name="Larimer F."/>
            <person name="Land M."/>
            <person name="Hauser L."/>
            <person name="Kyrpides N."/>
            <person name="Anderson I."/>
            <person name="Wall J.D."/>
            <person name="Arkin A.P."/>
            <person name="Dehal P."/>
            <person name="Chivian D."/>
            <person name="Giles B."/>
            <person name="Hazen T.C."/>
        </authorList>
    </citation>
    <scope>NUCLEOTIDE SEQUENCE [LARGE SCALE GENOMIC DNA]</scope>
    <source>
        <strain>ATCC 14822 / DSM 2638 / NCIMB 8403 / VKM B-1763</strain>
    </source>
</reference>
<name>RL4_MARSD</name>
<keyword id="KW-1185">Reference proteome</keyword>
<keyword id="KW-0687">Ribonucleoprotein</keyword>
<keyword id="KW-0689">Ribosomal protein</keyword>
<keyword id="KW-0694">RNA-binding</keyword>
<keyword id="KW-0699">rRNA-binding</keyword>
<sequence>MATITIYDQTKKEVGSMDLAPEVFEVPVKPEILHLVVRSQLAAKRQGTHATKTRGMKRGGGAKPWRQKGTGRARAGSTRSPLWRGGGTTFGPQPRDYSFKVNKKVRRLALKMALTSRLSEEKMMVVKNIDLPEIKTKLFVEVAEALGLEKALVVVKDADNKLLLSARNIPGIKLITADQLNVYDILKARQLVMLENAAQDLQERLK</sequence>
<feature type="chain" id="PRO_1000214566" description="Large ribosomal subunit protein uL4">
    <location>
        <begin position="1"/>
        <end position="206"/>
    </location>
</feature>
<feature type="region of interest" description="Disordered" evidence="2">
    <location>
        <begin position="44"/>
        <end position="87"/>
    </location>
</feature>
<evidence type="ECO:0000255" key="1">
    <source>
        <dbReference type="HAMAP-Rule" id="MF_01328"/>
    </source>
</evidence>
<evidence type="ECO:0000256" key="2">
    <source>
        <dbReference type="SAM" id="MobiDB-lite"/>
    </source>
</evidence>
<evidence type="ECO:0000305" key="3"/>
<accession>C6C186</accession>
<comment type="function">
    <text evidence="1">One of the primary rRNA binding proteins, this protein initially binds near the 5'-end of the 23S rRNA. It is important during the early stages of 50S assembly. It makes multiple contacts with different domains of the 23S rRNA in the assembled 50S subunit and ribosome.</text>
</comment>
<comment type="function">
    <text evidence="1">Forms part of the polypeptide exit tunnel.</text>
</comment>
<comment type="subunit">
    <text evidence="1">Part of the 50S ribosomal subunit.</text>
</comment>
<comment type="similarity">
    <text evidence="1">Belongs to the universal ribosomal protein uL4 family.</text>
</comment>